<sequence>MALLPDKEKLLRNFLRCANWEEKYLYIIELGQRLPELRDEDRSPQNSIQGCQSQVWIVMRQNAQGIIELQGDSDAAIVKGLIAVVFILYDQMTPQDVVNFDVRPWFEKMALTQHLTPSRSQGLEAMIRAIRAKAAALS</sequence>
<reference key="1">
    <citation type="journal article" date="2001" name="Nature">
        <title>Genome sequence of enterohaemorrhagic Escherichia coli O157:H7.</title>
        <authorList>
            <person name="Perna N.T."/>
            <person name="Plunkett G. III"/>
            <person name="Burland V."/>
            <person name="Mau B."/>
            <person name="Glasner J.D."/>
            <person name="Rose D.J."/>
            <person name="Mayhew G.F."/>
            <person name="Evans P.S."/>
            <person name="Gregor J."/>
            <person name="Kirkpatrick H.A."/>
            <person name="Posfai G."/>
            <person name="Hackett J."/>
            <person name="Klink S."/>
            <person name="Boutin A."/>
            <person name="Shao Y."/>
            <person name="Miller L."/>
            <person name="Grotbeck E.J."/>
            <person name="Davis N.W."/>
            <person name="Lim A."/>
            <person name="Dimalanta E.T."/>
            <person name="Potamousis K."/>
            <person name="Apodaca J."/>
            <person name="Anantharaman T.S."/>
            <person name="Lin J."/>
            <person name="Yen G."/>
            <person name="Schwartz D.C."/>
            <person name="Welch R.A."/>
            <person name="Blattner F.R."/>
        </authorList>
    </citation>
    <scope>NUCLEOTIDE SEQUENCE [LARGE SCALE GENOMIC DNA]</scope>
    <source>
        <strain>O157:H7 / EDL933 / ATCC 700927 / EHEC</strain>
    </source>
</reference>
<reference key="2">
    <citation type="journal article" date="2001" name="DNA Res.">
        <title>Complete genome sequence of enterohemorrhagic Escherichia coli O157:H7 and genomic comparison with a laboratory strain K-12.</title>
        <authorList>
            <person name="Hayashi T."/>
            <person name="Makino K."/>
            <person name="Ohnishi M."/>
            <person name="Kurokawa K."/>
            <person name="Ishii K."/>
            <person name="Yokoyama K."/>
            <person name="Han C.-G."/>
            <person name="Ohtsubo E."/>
            <person name="Nakayama K."/>
            <person name="Murata T."/>
            <person name="Tanaka M."/>
            <person name="Tobe T."/>
            <person name="Iida T."/>
            <person name="Takami H."/>
            <person name="Honda T."/>
            <person name="Sasakawa C."/>
            <person name="Ogasawara N."/>
            <person name="Yasunaga T."/>
            <person name="Kuhara S."/>
            <person name="Shiba T."/>
            <person name="Hattori M."/>
            <person name="Shinagawa H."/>
        </authorList>
    </citation>
    <scope>NUCLEOTIDE SEQUENCE [LARGE SCALE GENOMIC DNA]</scope>
    <source>
        <strain>O157:H7 / Sakai / RIMD 0509952 / EHEC</strain>
    </source>
</reference>
<keyword id="KW-0963">Cytoplasm</keyword>
<keyword id="KW-1185">Reference proteome</keyword>
<dbReference type="EMBL" id="AE005174">
    <property type="protein sequence ID" value="AAG56666.1"/>
    <property type="molecule type" value="Genomic_DNA"/>
</dbReference>
<dbReference type="EMBL" id="BA000007">
    <property type="protein sequence ID" value="BAB35809.1"/>
    <property type="molecule type" value="Genomic_DNA"/>
</dbReference>
<dbReference type="PIR" id="B90927">
    <property type="entry name" value="B90927"/>
</dbReference>
<dbReference type="PIR" id="F85775">
    <property type="entry name" value="F85775"/>
</dbReference>
<dbReference type="RefSeq" id="NP_310413.1">
    <property type="nucleotide sequence ID" value="NC_002695.1"/>
</dbReference>
<dbReference type="RefSeq" id="WP_001196532.1">
    <property type="nucleotide sequence ID" value="NZ_VOAI01000007.1"/>
</dbReference>
<dbReference type="SMR" id="Q7ADI5"/>
<dbReference type="STRING" id="155864.Z2707"/>
<dbReference type="GeneID" id="912512"/>
<dbReference type="KEGG" id="ece:Z2707"/>
<dbReference type="KEGG" id="ecs:ECs_2386"/>
<dbReference type="PATRIC" id="fig|386585.9.peg.2499"/>
<dbReference type="eggNOG" id="COG2166">
    <property type="taxonomic scope" value="Bacteria"/>
</dbReference>
<dbReference type="HOGENOM" id="CLU_124502_1_1_6"/>
<dbReference type="OMA" id="NFSRCAN"/>
<dbReference type="UniPathway" id="UPA00266"/>
<dbReference type="Proteomes" id="UP000000558">
    <property type="component" value="Chromosome"/>
</dbReference>
<dbReference type="Proteomes" id="UP000002519">
    <property type="component" value="Chromosome"/>
</dbReference>
<dbReference type="GO" id="GO:0005737">
    <property type="term" value="C:cytoplasm"/>
    <property type="evidence" value="ECO:0007669"/>
    <property type="project" value="UniProtKB-SubCell"/>
</dbReference>
<dbReference type="GO" id="GO:0016226">
    <property type="term" value="P:iron-sulfur cluster assembly"/>
    <property type="evidence" value="ECO:0007669"/>
    <property type="project" value="InterPro"/>
</dbReference>
<dbReference type="GO" id="GO:0006790">
    <property type="term" value="P:sulfur compound metabolic process"/>
    <property type="evidence" value="ECO:0007669"/>
    <property type="project" value="InterPro"/>
</dbReference>
<dbReference type="FunFam" id="3.90.1010.10:FF:000004">
    <property type="entry name" value="Cysteine desulfuration protein SufE"/>
    <property type="match status" value="1"/>
</dbReference>
<dbReference type="Gene3D" id="3.90.1010.10">
    <property type="match status" value="1"/>
</dbReference>
<dbReference type="HAMAP" id="MF_01832">
    <property type="entry name" value="SufE"/>
    <property type="match status" value="1"/>
</dbReference>
<dbReference type="InterPro" id="IPR023939">
    <property type="entry name" value="Cysteine_desulfuration_SufE"/>
</dbReference>
<dbReference type="InterPro" id="IPR003808">
    <property type="entry name" value="Fe-S_metab-assoc_dom"/>
</dbReference>
<dbReference type="NCBIfam" id="NF006792">
    <property type="entry name" value="PRK09296.1"/>
    <property type="match status" value="1"/>
</dbReference>
<dbReference type="PANTHER" id="PTHR43597:SF3">
    <property type="entry name" value="CYSTEINE DESULFURATION PROTEIN SUFE"/>
    <property type="match status" value="1"/>
</dbReference>
<dbReference type="PANTHER" id="PTHR43597">
    <property type="entry name" value="SULFUR ACCEPTOR PROTEIN CSDE"/>
    <property type="match status" value="1"/>
</dbReference>
<dbReference type="Pfam" id="PF02657">
    <property type="entry name" value="SufE"/>
    <property type="match status" value="1"/>
</dbReference>
<dbReference type="SUPFAM" id="SSF82649">
    <property type="entry name" value="SufE/NifU"/>
    <property type="match status" value="1"/>
</dbReference>
<protein>
    <recommendedName>
        <fullName evidence="1">Cysteine desulfuration protein SufE</fullName>
    </recommendedName>
</protein>
<comment type="function">
    <text evidence="1">Participates in cysteine desulfuration mediated by SufS. Cysteine desulfuration mobilizes sulfur from L-cysteine to yield L-alanine and constitutes an essential step in sulfur metabolism for biosynthesis of a variety of sulfur-containing biomolecules. Functions as a sulfur acceptor for SufS, by mediating the direct transfer of the sulfur atom from the S-sulfanylcysteine of SufS, an intermediate product of cysteine desulfuration process.</text>
</comment>
<comment type="pathway">
    <text evidence="1">Cofactor biosynthesis; iron-sulfur cluster biosynthesis.</text>
</comment>
<comment type="subunit">
    <text evidence="1">Homodimer. Interacts with SufS.</text>
</comment>
<comment type="subcellular location">
    <subcellularLocation>
        <location evidence="1">Cytoplasm</location>
    </subcellularLocation>
</comment>
<comment type="similarity">
    <text evidence="1">Belongs to the SufE family.</text>
</comment>
<evidence type="ECO:0000255" key="1">
    <source>
        <dbReference type="HAMAP-Rule" id="MF_01832"/>
    </source>
</evidence>
<accession>Q7ADI5</accession>
<accession>Q8X603</accession>
<organism>
    <name type="scientific">Escherichia coli O157:H7</name>
    <dbReference type="NCBI Taxonomy" id="83334"/>
    <lineage>
        <taxon>Bacteria</taxon>
        <taxon>Pseudomonadati</taxon>
        <taxon>Pseudomonadota</taxon>
        <taxon>Gammaproteobacteria</taxon>
        <taxon>Enterobacterales</taxon>
        <taxon>Enterobacteriaceae</taxon>
        <taxon>Escherichia</taxon>
    </lineage>
</organism>
<feature type="chain" id="PRO_0000202125" description="Cysteine desulfuration protein SufE">
    <location>
        <begin position="1"/>
        <end position="138"/>
    </location>
</feature>
<feature type="active site" description="Cysteine persulfide intermediate" evidence="1">
    <location>
        <position position="51"/>
    </location>
</feature>
<gene>
    <name evidence="1" type="primary">sufE</name>
    <name type="ordered locus">Z2707</name>
    <name type="ordered locus">ECs2386</name>
</gene>
<proteinExistence type="inferred from homology"/>
<name>SUFE_ECO57</name>